<feature type="chain" id="PRO_0000142103" description="1-(5-phosphoribosyl)-5-[(5-phosphoribosylamino)methylideneamino] imidazole-4-carboxamide isomerase">
    <location>
        <begin position="1"/>
        <end position="232"/>
    </location>
</feature>
<feature type="active site" description="Proton acceptor" evidence="1">
    <location>
        <position position="9"/>
    </location>
</feature>
<feature type="active site" description="Proton donor" evidence="1">
    <location>
        <position position="129"/>
    </location>
</feature>
<comment type="catalytic activity">
    <reaction>
        <text>1-(5-phospho-beta-D-ribosyl)-5-[(5-phospho-beta-D-ribosylamino)methylideneamino]imidazole-4-carboxamide = 5-[(5-phospho-1-deoxy-D-ribulos-1-ylimino)methylamino]-1-(5-phospho-beta-D-ribosyl)imidazole-4-carboxamide</text>
        <dbReference type="Rhea" id="RHEA:15469"/>
        <dbReference type="ChEBI" id="CHEBI:58435"/>
        <dbReference type="ChEBI" id="CHEBI:58525"/>
        <dbReference type="EC" id="5.3.1.16"/>
    </reaction>
</comment>
<comment type="pathway">
    <text>Amino-acid biosynthesis; L-histidine biosynthesis; L-histidine from 5-phospho-alpha-D-ribose 1-diphosphate: step 4/9.</text>
</comment>
<comment type="subcellular location">
    <subcellularLocation>
        <location evidence="1">Cytoplasm</location>
    </subcellularLocation>
</comment>
<comment type="similarity">
    <text evidence="2">Belongs to the HisA/HisF family.</text>
</comment>
<evidence type="ECO:0000250" key="1"/>
<evidence type="ECO:0000305" key="2"/>
<name>HIS4_SACS2</name>
<proteinExistence type="inferred from homology"/>
<reference key="1">
    <citation type="journal article" date="1997" name="J. Bacteriol.">
        <title>Evolutionary analysis of the hisCGABdFDEHI gene cluster from the archaeon Sulfolobus solfataricus P2.</title>
        <authorList>
            <person name="Charlebois R.L."/>
            <person name="Sensen C.W."/>
            <person name="Doolittle W.F."/>
            <person name="Brown J.R."/>
        </authorList>
    </citation>
    <scope>NUCLEOTIDE SEQUENCE [GENOMIC DNA]</scope>
    <source>
        <strain>ATCC 35092 / DSM 1617 / JCM 11322 / P2</strain>
    </source>
</reference>
<reference key="2">
    <citation type="journal article" date="2000" name="Genome">
        <title>Gene content and organization of a 281-kbp contig from the genome of the extremely thermophilic archaeon, Sulfolobus solfataricus P2.</title>
        <authorList>
            <person name="Charlebois R.L."/>
            <person name="Singh R.K."/>
            <person name="Chan-Weiher C.C.-Y."/>
            <person name="Allard G."/>
            <person name="Chow C."/>
            <person name="Confalonieri F."/>
            <person name="Curtis B."/>
            <person name="Duguet M."/>
            <person name="Erauso G."/>
            <person name="Faguy D."/>
            <person name="Gaasterland T."/>
            <person name="Garrett R.A."/>
            <person name="Gordon P."/>
            <person name="Jeffries A.C."/>
            <person name="Kozera C."/>
            <person name="Kushwaha N."/>
            <person name="Lafleur E."/>
            <person name="Medina N."/>
            <person name="Peng X."/>
            <person name="Penny S.L."/>
            <person name="She Q."/>
            <person name="St Jean A."/>
            <person name="van der Oost J."/>
            <person name="Young F."/>
            <person name="Zivanovic Y."/>
            <person name="Doolittle W.F."/>
            <person name="Ragan M.A."/>
            <person name="Sensen C.W."/>
        </authorList>
    </citation>
    <scope>NUCLEOTIDE SEQUENCE [LARGE SCALE GENOMIC DNA]</scope>
    <source>
        <strain>ATCC 35092 / DSM 1617 / JCM 11322 / P2</strain>
    </source>
</reference>
<reference key="3">
    <citation type="journal article" date="2001" name="Proc. Natl. Acad. Sci. U.S.A.">
        <title>The complete genome of the crenarchaeon Sulfolobus solfataricus P2.</title>
        <authorList>
            <person name="She Q."/>
            <person name="Singh R.K."/>
            <person name="Confalonieri F."/>
            <person name="Zivanovic Y."/>
            <person name="Allard G."/>
            <person name="Awayez M.J."/>
            <person name="Chan-Weiher C.C.-Y."/>
            <person name="Clausen I.G."/>
            <person name="Curtis B.A."/>
            <person name="De Moors A."/>
            <person name="Erauso G."/>
            <person name="Fletcher C."/>
            <person name="Gordon P.M.K."/>
            <person name="Heikamp-de Jong I."/>
            <person name="Jeffries A.C."/>
            <person name="Kozera C.J."/>
            <person name="Medina N."/>
            <person name="Peng X."/>
            <person name="Thi-Ngoc H.P."/>
            <person name="Redder P."/>
            <person name="Schenk M.E."/>
            <person name="Theriault C."/>
            <person name="Tolstrup N."/>
            <person name="Charlebois R.L."/>
            <person name="Doolittle W.F."/>
            <person name="Duguet M."/>
            <person name="Gaasterland T."/>
            <person name="Garrett R.A."/>
            <person name="Ragan M.A."/>
            <person name="Sensen C.W."/>
            <person name="Van der Oost J."/>
        </authorList>
    </citation>
    <scope>NUCLEOTIDE SEQUENCE [LARGE SCALE GENOMIC DNA]</scope>
    <source>
        <strain>ATCC 35092 / DSM 1617 / JCM 11322 / P2</strain>
    </source>
</reference>
<keyword id="KW-0028">Amino-acid biosynthesis</keyword>
<keyword id="KW-0963">Cytoplasm</keyword>
<keyword id="KW-0368">Histidine biosynthesis</keyword>
<keyword id="KW-0413">Isomerase</keyword>
<keyword id="KW-1185">Reference proteome</keyword>
<gene>
    <name type="primary">hisA</name>
    <name type="ordered locus">SSO0594</name>
    <name type="ORF">C08_055</name>
</gene>
<protein>
    <recommendedName>
        <fullName>1-(5-phosphoribosyl)-5-[(5-phosphoribosylamino)methylideneamino] imidazole-4-carboxamide isomerase</fullName>
        <ecNumber>5.3.1.16</ecNumber>
    </recommendedName>
    <alternativeName>
        <fullName>Phosphoribosylformimino-5-aminoimidazole carboxamide ribotide isomerase</fullName>
    </alternativeName>
</protein>
<sequence>MNEIIPSIDISFGKAVKRIRGVRGTGLVLGNPIELANKLYNEGYSRIHVVDLDAAEGVGNNEMYIKEICKIGFDWIQVGGGIRDVEKAKRLISLDVNALIFSTIVFTNFNLFYNIVREIGNNRVIVSIDYDDTKRVLISGWKERSMEIIDGIKKVNELELLGIILTYVTNEGTVKGIDYSVKDYAKLIRGVKEYAGGVSSDSDITFLKNVGFDYIIVGMAFYLNKIRGTNVV</sequence>
<accession>O33772</accession>
<organism>
    <name type="scientific">Saccharolobus solfataricus (strain ATCC 35092 / DSM 1617 / JCM 11322 / P2)</name>
    <name type="common">Sulfolobus solfataricus</name>
    <dbReference type="NCBI Taxonomy" id="273057"/>
    <lineage>
        <taxon>Archaea</taxon>
        <taxon>Thermoproteota</taxon>
        <taxon>Thermoprotei</taxon>
        <taxon>Sulfolobales</taxon>
        <taxon>Sulfolobaceae</taxon>
        <taxon>Saccharolobus</taxon>
    </lineage>
</organism>
<dbReference type="EC" id="5.3.1.16"/>
<dbReference type="EMBL" id="U82227">
    <property type="protein sequence ID" value="AAB63020.1"/>
    <property type="molecule type" value="Genomic_DNA"/>
</dbReference>
<dbReference type="EMBL" id="Y18930">
    <property type="protein sequence ID" value="CAB57705.1"/>
    <property type="molecule type" value="Genomic_DNA"/>
</dbReference>
<dbReference type="EMBL" id="AE006641">
    <property type="protein sequence ID" value="AAK40906.1"/>
    <property type="molecule type" value="Genomic_DNA"/>
</dbReference>
<dbReference type="PIR" id="C90206">
    <property type="entry name" value="C90206"/>
</dbReference>
<dbReference type="RefSeq" id="WP_009991113.1">
    <property type="nucleotide sequence ID" value="NC_002754.1"/>
</dbReference>
<dbReference type="SMR" id="O33772"/>
<dbReference type="FunCoup" id="O33772">
    <property type="interactions" value="89"/>
</dbReference>
<dbReference type="STRING" id="273057.SSO0594"/>
<dbReference type="PaxDb" id="273057-SSO0594"/>
<dbReference type="EnsemblBacteria" id="AAK40906">
    <property type="protein sequence ID" value="AAK40906"/>
    <property type="gene ID" value="SSO0594"/>
</dbReference>
<dbReference type="GeneID" id="44129596"/>
<dbReference type="KEGG" id="sso:SSO0594"/>
<dbReference type="PATRIC" id="fig|273057.12.peg.602"/>
<dbReference type="eggNOG" id="arCOG00618">
    <property type="taxonomic scope" value="Archaea"/>
</dbReference>
<dbReference type="HOGENOM" id="CLU_048577_1_1_2"/>
<dbReference type="InParanoid" id="O33772"/>
<dbReference type="PhylomeDB" id="O33772"/>
<dbReference type="UniPathway" id="UPA00031">
    <property type="reaction ID" value="UER00009"/>
</dbReference>
<dbReference type="Proteomes" id="UP000001974">
    <property type="component" value="Chromosome"/>
</dbReference>
<dbReference type="GO" id="GO:0005737">
    <property type="term" value="C:cytoplasm"/>
    <property type="evidence" value="ECO:0000318"/>
    <property type="project" value="GO_Central"/>
</dbReference>
<dbReference type="GO" id="GO:0003949">
    <property type="term" value="F:1-(5-phosphoribosyl)-5-[(5-phosphoribosylamino)methylideneamino]imidazole-4-carboxamide isomerase activity"/>
    <property type="evidence" value="ECO:0000318"/>
    <property type="project" value="GO_Central"/>
</dbReference>
<dbReference type="GO" id="GO:0000105">
    <property type="term" value="P:L-histidine biosynthetic process"/>
    <property type="evidence" value="ECO:0000318"/>
    <property type="project" value="GO_Central"/>
</dbReference>
<dbReference type="CDD" id="cd04732">
    <property type="entry name" value="HisA"/>
    <property type="match status" value="1"/>
</dbReference>
<dbReference type="Gene3D" id="3.20.20.70">
    <property type="entry name" value="Aldolase class I"/>
    <property type="match status" value="1"/>
</dbReference>
<dbReference type="HAMAP" id="MF_01014">
    <property type="entry name" value="HisA"/>
    <property type="match status" value="1"/>
</dbReference>
<dbReference type="InterPro" id="IPR013785">
    <property type="entry name" value="Aldolase_TIM"/>
</dbReference>
<dbReference type="InterPro" id="IPR006062">
    <property type="entry name" value="His_biosynth"/>
</dbReference>
<dbReference type="InterPro" id="IPR044524">
    <property type="entry name" value="Isoase_HisA-like"/>
</dbReference>
<dbReference type="InterPro" id="IPR023016">
    <property type="entry name" value="Isoase_HisA-like_bact"/>
</dbReference>
<dbReference type="InterPro" id="IPR011060">
    <property type="entry name" value="RibuloseP-bd_barrel"/>
</dbReference>
<dbReference type="NCBIfam" id="NF010113">
    <property type="entry name" value="PRK13586.1"/>
    <property type="match status" value="1"/>
</dbReference>
<dbReference type="PANTHER" id="PTHR43090">
    <property type="entry name" value="1-(5-PHOSPHORIBOSYL)-5-[(5-PHOSPHORIBOSYLAMINO)METHYLIDENEAMINO] IMIDAZOLE-4-CARBOXAMIDE ISOMERASE"/>
    <property type="match status" value="1"/>
</dbReference>
<dbReference type="PANTHER" id="PTHR43090:SF2">
    <property type="entry name" value="1-(5-PHOSPHORIBOSYL)-5-[(5-PHOSPHORIBOSYLAMINO)METHYLIDENEAMINO] IMIDAZOLE-4-CARBOXAMIDE ISOMERASE"/>
    <property type="match status" value="1"/>
</dbReference>
<dbReference type="Pfam" id="PF00977">
    <property type="entry name" value="His_biosynth"/>
    <property type="match status" value="1"/>
</dbReference>
<dbReference type="SUPFAM" id="SSF51366">
    <property type="entry name" value="Ribulose-phoshate binding barrel"/>
    <property type="match status" value="1"/>
</dbReference>